<reference key="1">
    <citation type="journal article" date="2000" name="J. Mol. Evol.">
        <title>The structure and gene repertoire of an ancient red algal plastid genome.</title>
        <authorList>
            <person name="Gloeckner G."/>
            <person name="Rosenthal A."/>
            <person name="Valentin K.-U."/>
        </authorList>
    </citation>
    <scope>NUCLEOTIDE SEQUENCE [LARGE SCALE GENOMIC DNA]</scope>
    <source>
        <strain>RK-1</strain>
    </source>
</reference>
<accession>Q9TLT8</accession>
<geneLocation type="chloroplast"/>
<comment type="subunit">
    <text evidence="1">Part of the 30S ribosomal subunit.</text>
</comment>
<comment type="subcellular location">
    <subcellularLocation>
        <location>Plastid</location>
        <location>Chloroplast</location>
    </subcellularLocation>
</comment>
<comment type="similarity">
    <text evidence="2">Belongs to the universal ribosomal protein uS3 family.</text>
</comment>
<feature type="chain" id="PRO_0000130277" description="Small ribosomal subunit protein uS3c">
    <location>
        <begin position="1"/>
        <end position="207"/>
    </location>
</feature>
<feature type="domain" description="KH type-2">
    <location>
        <begin position="39"/>
        <end position="109"/>
    </location>
</feature>
<keyword id="KW-0150">Chloroplast</keyword>
<keyword id="KW-0934">Plastid</keyword>
<keyword id="KW-0687">Ribonucleoprotein</keyword>
<keyword id="KW-0689">Ribosomal protein</keyword>
<keyword id="KW-0694">RNA-binding</keyword>
<keyword id="KW-0699">rRNA-binding</keyword>
<name>RR3_CYACA</name>
<protein>
    <recommendedName>
        <fullName evidence="2">Small ribosomal subunit protein uS3c</fullName>
    </recommendedName>
    <alternativeName>
        <fullName>30S ribosomal protein S3, chloroplastic</fullName>
    </alternativeName>
</protein>
<sequence length="207" mass="23374">MGQKINPLSFRLGINKLHHSSWFARPQSYTAILQEDKKIRDYIFTNLLRASISRIQINRQFNQVELQLHTSRPGVIIGRSGTGIDSLKRNVKNLLSKQSQLKINIIDVTNPDIDAVLLACFISQQLESRTTFKRAVRQAIQRAQKSDIPGIKIQVSGRLNGAEIARTEWIREGRVPLQTLKADLDYATSSAYTSFGVVGVKVWIFKG</sequence>
<gene>
    <name type="primary">rps3</name>
</gene>
<evidence type="ECO:0000250" key="1"/>
<evidence type="ECO:0000305" key="2"/>
<organism>
    <name type="scientific">Cyanidium caldarium</name>
    <name type="common">Red alga</name>
    <dbReference type="NCBI Taxonomy" id="2771"/>
    <lineage>
        <taxon>Eukaryota</taxon>
        <taxon>Rhodophyta</taxon>
        <taxon>Bangiophyceae</taxon>
        <taxon>Cyanidiales</taxon>
        <taxon>Cyanidiaceae</taxon>
        <taxon>Cyanidium</taxon>
    </lineage>
</organism>
<proteinExistence type="inferred from homology"/>
<dbReference type="EMBL" id="AF022186">
    <property type="protein sequence ID" value="AAF12913.1"/>
    <property type="molecule type" value="Genomic_DNA"/>
</dbReference>
<dbReference type="RefSeq" id="NP_045181.1">
    <property type="nucleotide sequence ID" value="NC_001840.1"/>
</dbReference>
<dbReference type="SMR" id="Q9TLT8"/>
<dbReference type="GeneID" id="800146"/>
<dbReference type="GO" id="GO:0009507">
    <property type="term" value="C:chloroplast"/>
    <property type="evidence" value="ECO:0007669"/>
    <property type="project" value="UniProtKB-SubCell"/>
</dbReference>
<dbReference type="GO" id="GO:0022627">
    <property type="term" value="C:cytosolic small ribosomal subunit"/>
    <property type="evidence" value="ECO:0007669"/>
    <property type="project" value="TreeGrafter"/>
</dbReference>
<dbReference type="GO" id="GO:0019843">
    <property type="term" value="F:rRNA binding"/>
    <property type="evidence" value="ECO:0007669"/>
    <property type="project" value="UniProtKB-UniRule"/>
</dbReference>
<dbReference type="GO" id="GO:0003735">
    <property type="term" value="F:structural constituent of ribosome"/>
    <property type="evidence" value="ECO:0007669"/>
    <property type="project" value="InterPro"/>
</dbReference>
<dbReference type="GO" id="GO:0006412">
    <property type="term" value="P:translation"/>
    <property type="evidence" value="ECO:0007669"/>
    <property type="project" value="UniProtKB-UniRule"/>
</dbReference>
<dbReference type="CDD" id="cd02412">
    <property type="entry name" value="KH-II_30S_S3"/>
    <property type="match status" value="1"/>
</dbReference>
<dbReference type="FunFam" id="3.30.300.20:FF:000001">
    <property type="entry name" value="30S ribosomal protein S3"/>
    <property type="match status" value="1"/>
</dbReference>
<dbReference type="Gene3D" id="3.30.300.20">
    <property type="match status" value="1"/>
</dbReference>
<dbReference type="Gene3D" id="3.30.1140.32">
    <property type="entry name" value="Ribosomal protein S3, C-terminal domain"/>
    <property type="match status" value="1"/>
</dbReference>
<dbReference type="HAMAP" id="MF_01309_B">
    <property type="entry name" value="Ribosomal_uS3_B"/>
    <property type="match status" value="1"/>
</dbReference>
<dbReference type="InterPro" id="IPR015946">
    <property type="entry name" value="KH_dom-like_a/b"/>
</dbReference>
<dbReference type="InterPro" id="IPR004044">
    <property type="entry name" value="KH_dom_type_2"/>
</dbReference>
<dbReference type="InterPro" id="IPR009019">
    <property type="entry name" value="KH_sf_prok-type"/>
</dbReference>
<dbReference type="InterPro" id="IPR036419">
    <property type="entry name" value="Ribosomal_S3_C_sf"/>
</dbReference>
<dbReference type="InterPro" id="IPR005704">
    <property type="entry name" value="Ribosomal_uS3_bac-typ"/>
</dbReference>
<dbReference type="InterPro" id="IPR001351">
    <property type="entry name" value="Ribosomal_uS3_C"/>
</dbReference>
<dbReference type="InterPro" id="IPR018280">
    <property type="entry name" value="Ribosomal_uS3_CS"/>
</dbReference>
<dbReference type="NCBIfam" id="TIGR01009">
    <property type="entry name" value="rpsC_bact"/>
    <property type="match status" value="1"/>
</dbReference>
<dbReference type="PANTHER" id="PTHR11760">
    <property type="entry name" value="30S/40S RIBOSOMAL PROTEIN S3"/>
    <property type="match status" value="1"/>
</dbReference>
<dbReference type="PANTHER" id="PTHR11760:SF19">
    <property type="entry name" value="SMALL RIBOSOMAL SUBUNIT PROTEIN US3C"/>
    <property type="match status" value="1"/>
</dbReference>
<dbReference type="Pfam" id="PF07650">
    <property type="entry name" value="KH_2"/>
    <property type="match status" value="1"/>
</dbReference>
<dbReference type="Pfam" id="PF00189">
    <property type="entry name" value="Ribosomal_S3_C"/>
    <property type="match status" value="1"/>
</dbReference>
<dbReference type="SUPFAM" id="SSF54814">
    <property type="entry name" value="Prokaryotic type KH domain (KH-domain type II)"/>
    <property type="match status" value="1"/>
</dbReference>
<dbReference type="SUPFAM" id="SSF54821">
    <property type="entry name" value="Ribosomal protein S3 C-terminal domain"/>
    <property type="match status" value="1"/>
</dbReference>
<dbReference type="PROSITE" id="PS50823">
    <property type="entry name" value="KH_TYPE_2"/>
    <property type="match status" value="1"/>
</dbReference>
<dbReference type="PROSITE" id="PS00548">
    <property type="entry name" value="RIBOSOMAL_S3"/>
    <property type="match status" value="1"/>
</dbReference>